<proteinExistence type="evidence at protein level"/>
<sequence>MDIKFEGNDAECTAGLKKASEGSFVLKDHVLIEFKINGKVAGKIKTPCEGVVTFGKGLKPGIVLNKGQVIATVSECTHAIVIKDMCATCGKDLREKGGRAGQRKEQSTANVSMIHHVPELIVSDTLAKEIGSADENNLITNRKLVLLVDLDQTIIHTSDKPMTVDTENHKDITKYNLHSRVYTTKLRPHTTEFLNKMSNMYEMHIVTYGQRQYAHRIAQILDPDARLFEQRILSRDELFSAQHKTNNLKALFPCGDNLVVIIDDRSDVWMYSEALIQIKPYRFFKEVGDINAPKNSKEQMPVQIEDDAHEDKVLEEIERVLTNIHDKYYEKHDLRGSEEVLLDVKEVIKEERHKVLDGCVIVFSGIVPMGEKLERTDIYRLCTQFGAVIVPDVTDDVTHVVGARYGTQKVYQANRLNKFVVTVQWVYACVEKWLKADENLFQLTKESTPPVGRPLGSKYVNDLANMDTIGKAALADMNNEVDEALSDDEDDGDNEDEDDDGNDVGEDKGDENLEEKQEKNEEEMDDVEQNGSVENQSGDALENETDSTSRGQKRKHCPEMEDEEEESDSDNEDDDTPMSYKALLSDSRKKGRIVPENEDDAVFDVDDEKGHAPANIDEEEDDEDNEDEEVPESDDDDEFEDMAALIERQISDAVDEKDQ</sequence>
<organism evidence="10">
    <name type="scientific">Caenorhabditis elegans</name>
    <dbReference type="NCBI Taxonomy" id="6239"/>
    <lineage>
        <taxon>Eukaryota</taxon>
        <taxon>Metazoa</taxon>
        <taxon>Ecdysozoa</taxon>
        <taxon>Nematoda</taxon>
        <taxon>Chromadorea</taxon>
        <taxon>Rhabditida</taxon>
        <taxon>Rhabditina</taxon>
        <taxon>Rhabditomorpha</taxon>
        <taxon>Rhabditoidea</taxon>
        <taxon>Rhabditidae</taxon>
        <taxon>Peloderinae</taxon>
        <taxon>Caenorhabditis</taxon>
    </lineage>
</organism>
<protein>
    <recommendedName>
        <fullName evidence="1">RNA polymerase II subunit A C-terminal domain phosphatase</fullName>
        <ecNumber evidence="8 9">3.1.3.16</ecNumber>
    </recommendedName>
</protein>
<dbReference type="EC" id="3.1.3.16" evidence="8 9"/>
<dbReference type="EMBL" id="BX284601">
    <property type="protein sequence ID" value="CAC70088.2"/>
    <property type="molecule type" value="Genomic_DNA"/>
</dbReference>
<dbReference type="RefSeq" id="NP_492423.2">
    <property type="nucleotide sequence ID" value="NM_060022.5"/>
</dbReference>
<dbReference type="SMR" id="Q95QG8"/>
<dbReference type="FunCoup" id="Q95QG8">
    <property type="interactions" value="1883"/>
</dbReference>
<dbReference type="STRING" id="6239.F36F2.6.1"/>
<dbReference type="PaxDb" id="6239-F36F2.6"/>
<dbReference type="PeptideAtlas" id="Q95QG8"/>
<dbReference type="EnsemblMetazoa" id="F36F2.6.1">
    <property type="protein sequence ID" value="F36F2.6.1"/>
    <property type="gene ID" value="WBGene00009479"/>
</dbReference>
<dbReference type="GeneID" id="172719"/>
<dbReference type="KEGG" id="cel:CELE_F36F2.6"/>
<dbReference type="UCSC" id="F36F2.6">
    <property type="organism name" value="c. elegans"/>
</dbReference>
<dbReference type="AGR" id="WB:WBGene00009479"/>
<dbReference type="CTD" id="172719"/>
<dbReference type="WormBase" id="F36F2.6">
    <property type="protein sequence ID" value="CE39366"/>
    <property type="gene ID" value="WBGene00009479"/>
    <property type="gene designation" value="fcp-1"/>
</dbReference>
<dbReference type="eggNOG" id="KOG0323">
    <property type="taxonomic scope" value="Eukaryota"/>
</dbReference>
<dbReference type="GeneTree" id="ENSGT00390000015641"/>
<dbReference type="HOGENOM" id="CLU_007683_1_1_1"/>
<dbReference type="InParanoid" id="Q95QG8"/>
<dbReference type="OMA" id="DQTVIHC"/>
<dbReference type="OrthoDB" id="10249888at2759"/>
<dbReference type="PhylomeDB" id="Q95QG8"/>
<dbReference type="Reactome" id="R-CEL-112382">
    <property type="pathway name" value="Formation of RNA Pol II elongation complex"/>
</dbReference>
<dbReference type="Reactome" id="R-CEL-113418">
    <property type="pathway name" value="Formation of the Early Elongation Complex"/>
</dbReference>
<dbReference type="Reactome" id="R-CEL-674695">
    <property type="pathway name" value="RNA Polymerase II Pre-transcription Events"/>
</dbReference>
<dbReference type="Reactome" id="R-CEL-6796648">
    <property type="pathway name" value="TP53 Regulates Transcription of DNA Repair Genes"/>
</dbReference>
<dbReference type="Reactome" id="R-CEL-75955">
    <property type="pathway name" value="RNA Polymerase II Transcription Elongation"/>
</dbReference>
<dbReference type="PRO" id="PR:Q95QG8"/>
<dbReference type="Proteomes" id="UP000001940">
    <property type="component" value="Chromosome I"/>
</dbReference>
<dbReference type="Bgee" id="WBGene00009479">
    <property type="expression patterns" value="Expressed in adult organism and 4 other cell types or tissues"/>
</dbReference>
<dbReference type="GO" id="GO:0005634">
    <property type="term" value="C:nucleus"/>
    <property type="evidence" value="ECO:0007669"/>
    <property type="project" value="UniProtKB-SubCell"/>
</dbReference>
<dbReference type="GO" id="GO:0008420">
    <property type="term" value="F:RNA polymerase II CTD heptapeptide repeat phosphatase activity"/>
    <property type="evidence" value="ECO:0000315"/>
    <property type="project" value="UniProtKB"/>
</dbReference>
<dbReference type="GO" id="GO:0000122">
    <property type="term" value="P:negative regulation of transcription by RNA polymerase II"/>
    <property type="evidence" value="ECO:0000315"/>
    <property type="project" value="UniProtKB"/>
</dbReference>
<dbReference type="GO" id="GO:0048477">
    <property type="term" value="P:oogenesis"/>
    <property type="evidence" value="ECO:0007669"/>
    <property type="project" value="UniProtKB-KW"/>
</dbReference>
<dbReference type="CDD" id="cd17729">
    <property type="entry name" value="BRCT_CTDP1"/>
    <property type="match status" value="1"/>
</dbReference>
<dbReference type="CDD" id="cd07521">
    <property type="entry name" value="HAD_FCP1-like"/>
    <property type="match status" value="1"/>
</dbReference>
<dbReference type="FunFam" id="3.40.50.10190:FF:000007">
    <property type="entry name" value="RNA polymerase II subunit A C-terminal domain phosphatase"/>
    <property type="match status" value="1"/>
</dbReference>
<dbReference type="Gene3D" id="3.40.50.10190">
    <property type="entry name" value="BRCT domain"/>
    <property type="match status" value="1"/>
</dbReference>
<dbReference type="Gene3D" id="3.40.50.1000">
    <property type="entry name" value="HAD superfamily/HAD-like"/>
    <property type="match status" value="1"/>
</dbReference>
<dbReference type="Gene3D" id="1.10.287.10">
    <property type="entry name" value="S15/NS1, RNA-binding"/>
    <property type="match status" value="1"/>
</dbReference>
<dbReference type="InterPro" id="IPR001357">
    <property type="entry name" value="BRCT_dom"/>
</dbReference>
<dbReference type="InterPro" id="IPR036420">
    <property type="entry name" value="BRCT_dom_sf"/>
</dbReference>
<dbReference type="InterPro" id="IPR039189">
    <property type="entry name" value="Fcp1"/>
</dbReference>
<dbReference type="InterPro" id="IPR004274">
    <property type="entry name" value="FCP1_dom"/>
</dbReference>
<dbReference type="InterPro" id="IPR011947">
    <property type="entry name" value="FCP1_euk"/>
</dbReference>
<dbReference type="InterPro" id="IPR036412">
    <property type="entry name" value="HAD-like_sf"/>
</dbReference>
<dbReference type="InterPro" id="IPR023214">
    <property type="entry name" value="HAD_sf"/>
</dbReference>
<dbReference type="NCBIfam" id="TIGR02250">
    <property type="entry name" value="FCP1_euk"/>
    <property type="match status" value="1"/>
</dbReference>
<dbReference type="PANTHER" id="PTHR23081">
    <property type="entry name" value="RNA POLYMERASE II CTD PHOSPHATASE"/>
    <property type="match status" value="1"/>
</dbReference>
<dbReference type="PANTHER" id="PTHR23081:SF36">
    <property type="entry name" value="RNA POLYMERASE II SUBUNIT A C-TERMINAL DOMAIN PHOSPHATASE"/>
    <property type="match status" value="1"/>
</dbReference>
<dbReference type="Pfam" id="PF00533">
    <property type="entry name" value="BRCT"/>
    <property type="match status" value="1"/>
</dbReference>
<dbReference type="Pfam" id="PF03031">
    <property type="entry name" value="NIF"/>
    <property type="match status" value="1"/>
</dbReference>
<dbReference type="SMART" id="SM00292">
    <property type="entry name" value="BRCT"/>
    <property type="match status" value="1"/>
</dbReference>
<dbReference type="SMART" id="SM00577">
    <property type="entry name" value="CPDc"/>
    <property type="match status" value="1"/>
</dbReference>
<dbReference type="SUPFAM" id="SSF52113">
    <property type="entry name" value="BRCT domain"/>
    <property type="match status" value="1"/>
</dbReference>
<dbReference type="SUPFAM" id="SSF56784">
    <property type="entry name" value="HAD-like"/>
    <property type="match status" value="1"/>
</dbReference>
<dbReference type="PROSITE" id="PS50172">
    <property type="entry name" value="BRCT"/>
    <property type="match status" value="1"/>
</dbReference>
<dbReference type="PROSITE" id="PS50969">
    <property type="entry name" value="FCP1"/>
    <property type="match status" value="1"/>
</dbReference>
<feature type="chain" id="PRO_0000443529" description="RNA polymerase II subunit A C-terminal domain phosphatase">
    <location>
        <begin position="1"/>
        <end position="659"/>
    </location>
</feature>
<feature type="domain" description="FCP1 homology" evidence="3">
    <location>
        <begin position="139"/>
        <end position="303"/>
    </location>
</feature>
<feature type="domain" description="BRCT" evidence="2">
    <location>
        <begin position="351"/>
        <end position="443"/>
    </location>
</feature>
<feature type="region of interest" description="Disordered" evidence="4">
    <location>
        <begin position="484"/>
        <end position="640"/>
    </location>
</feature>
<feature type="compositionally biased region" description="Acidic residues" evidence="4">
    <location>
        <begin position="484"/>
        <end position="504"/>
    </location>
</feature>
<feature type="compositionally biased region" description="Basic and acidic residues" evidence="4">
    <location>
        <begin position="505"/>
        <end position="519"/>
    </location>
</feature>
<feature type="compositionally biased region" description="Polar residues" evidence="4">
    <location>
        <begin position="529"/>
        <end position="538"/>
    </location>
</feature>
<feature type="compositionally biased region" description="Acidic residues" evidence="4">
    <location>
        <begin position="560"/>
        <end position="576"/>
    </location>
</feature>
<feature type="compositionally biased region" description="Acidic residues" evidence="4">
    <location>
        <begin position="596"/>
        <end position="607"/>
    </location>
</feature>
<feature type="compositionally biased region" description="Acidic residues" evidence="4">
    <location>
        <begin position="616"/>
        <end position="640"/>
    </location>
</feature>
<evidence type="ECO:0000250" key="1">
    <source>
        <dbReference type="UniProtKB" id="Q9Y5B0"/>
    </source>
</evidence>
<evidence type="ECO:0000255" key="2">
    <source>
        <dbReference type="PROSITE-ProRule" id="PRU00033"/>
    </source>
</evidence>
<evidence type="ECO:0000255" key="3">
    <source>
        <dbReference type="PROSITE-ProRule" id="PRU00336"/>
    </source>
</evidence>
<evidence type="ECO:0000256" key="4">
    <source>
        <dbReference type="SAM" id="MobiDB-lite"/>
    </source>
</evidence>
<evidence type="ECO:0000269" key="5">
    <source>
    </source>
</evidence>
<evidence type="ECO:0000269" key="6">
    <source>
    </source>
</evidence>
<evidence type="ECO:0000305" key="7"/>
<evidence type="ECO:0000305" key="8">
    <source>
    </source>
</evidence>
<evidence type="ECO:0000305" key="9">
    <source>
    </source>
</evidence>
<evidence type="ECO:0000312" key="10">
    <source>
        <dbReference type="Proteomes" id="UP000001940"/>
    </source>
</evidence>
<evidence type="ECO:0000312" key="11">
    <source>
        <dbReference type="WormBase" id="F36F2.6"/>
    </source>
</evidence>
<comment type="function">
    <text evidence="5 6">During the late stages of oogenesis, dephosphorylates 'Ser-5' of the heptad repeats YSPTSPS in the C-terminal domain of the largest RNA polymerase II subunit ama-1 (PubMed:17291483). Similarly, dephosphorylates 'Ser-5' of ama-1 in early embryonic cells prior to the activation of the zygotic transcription program at the 4-cell embryonic stage (PubMed:17291483). May dephosphorylate 'Ser-2' of the ama-1 heptad repeats YSPTSPS in embryonic somatic and germline cells (PubMed:23903194).</text>
</comment>
<comment type="catalytic activity">
    <reaction evidence="8 9">
        <text>O-phospho-L-seryl-[protein] + H2O = L-seryl-[protein] + phosphate</text>
        <dbReference type="Rhea" id="RHEA:20629"/>
        <dbReference type="Rhea" id="RHEA-COMP:9863"/>
        <dbReference type="Rhea" id="RHEA-COMP:11604"/>
        <dbReference type="ChEBI" id="CHEBI:15377"/>
        <dbReference type="ChEBI" id="CHEBI:29999"/>
        <dbReference type="ChEBI" id="CHEBI:43474"/>
        <dbReference type="ChEBI" id="CHEBI:83421"/>
        <dbReference type="EC" id="3.1.3.16"/>
    </reaction>
</comment>
<comment type="catalytic activity">
    <reaction evidence="8 9">
        <text>O-phospho-L-threonyl-[protein] + H2O = L-threonyl-[protein] + phosphate</text>
        <dbReference type="Rhea" id="RHEA:47004"/>
        <dbReference type="Rhea" id="RHEA-COMP:11060"/>
        <dbReference type="Rhea" id="RHEA-COMP:11605"/>
        <dbReference type="ChEBI" id="CHEBI:15377"/>
        <dbReference type="ChEBI" id="CHEBI:30013"/>
        <dbReference type="ChEBI" id="CHEBI:43474"/>
        <dbReference type="ChEBI" id="CHEBI:61977"/>
        <dbReference type="EC" id="3.1.3.16"/>
    </reaction>
</comment>
<comment type="subcellular location">
    <subcellularLocation>
        <location evidence="7">Nucleus</location>
    </subcellularLocation>
</comment>
<comment type="disruption phenotype">
    <text evidence="5 6">RNAi-mediated knockdown causes an arrest at the 100-cell embryonic stage (PubMed:17291483). In developing oocytes, results in an abnormal accumulation of 'Ser-5' phosphorylated ama-1 and a more diffused nuclear localization of phosphorylated ama-1 (PubMed:17291483). 'Ser-2' phosphorylated ama-1 is present in diakinetic oocyte but at low levels indicating that transcription is possibly blocked at the elongation stage (PubMed:17291483). Increased levels of 'Ser-2' phosphorylated ama-1 in embryonic and germline nuclei (PubMed:23903194). Simultaneous knockdown of components of the transcription pre-initiation complex including ama-1, rbp-2, cdk-7, rgr-1 or taf-4 abolishes phosphorylation of the ama-1 CTD domain repeats at 'Ser-5' in diakinetic oocytes (PubMed:17291483). A similar abnormal accumulation of 'Ser-5' phosphorylated ama-1 occurs in 1-cell and 2-cell embryos (PubMed:17291483).</text>
</comment>
<accession>Q95QG8</accession>
<reference evidence="10" key="1">
    <citation type="journal article" date="1998" name="Science">
        <title>Genome sequence of the nematode C. elegans: a platform for investigating biology.</title>
        <authorList>
            <consortium name="The C. elegans sequencing consortium"/>
        </authorList>
    </citation>
    <scope>NUCLEOTIDE SEQUENCE [LARGE SCALE GENOMIC DNA]</scope>
    <source>
        <strain evidence="10">Bristol N2</strain>
    </source>
</reference>
<reference evidence="7" key="2">
    <citation type="journal article" date="2007" name="Dev. Biol.">
        <title>Transcription reactivation steps stimulated by oocyte maturation in C. elegans.</title>
        <authorList>
            <person name="Walker A.K."/>
            <person name="Boag P.R."/>
            <person name="Blackwell T.K."/>
        </authorList>
    </citation>
    <scope>FUNCTION</scope>
    <scope>CATALYTIC ACTIVITY</scope>
    <scope>DISRUPTION PHENOTYPE</scope>
</reference>
<reference evidence="7" key="3">
    <citation type="journal article" date="2013" name="Development">
        <title>Phosphorylation of RNA polymerase II is independent of P-TEFb in the C. elegans germline.</title>
        <authorList>
            <person name="Bowman E.A."/>
            <person name="Bowman C.R."/>
            <person name="Ahn J.H."/>
            <person name="Kelly W.G."/>
        </authorList>
    </citation>
    <scope>FUNCTION</scope>
    <scope>CATALYTIC ACTIVITY</scope>
    <scope>DISRUPTION PHENOTYPE</scope>
</reference>
<keyword id="KW-0221">Differentiation</keyword>
<keyword id="KW-0378">Hydrolase</keyword>
<keyword id="KW-0539">Nucleus</keyword>
<keyword id="KW-0896">Oogenesis</keyword>
<keyword id="KW-0904">Protein phosphatase</keyword>
<keyword id="KW-1185">Reference proteome</keyword>
<name>FCP1_CAEEL</name>
<gene>
    <name evidence="11" type="primary">fcp-1</name>
    <name evidence="11" type="ORF">F36F2.6</name>
</gene>